<gene>
    <name evidence="1" type="primary">frdC</name>
    <name type="ordered locus">VV1_1267</name>
</gene>
<reference key="1">
    <citation type="submission" date="2002-12" db="EMBL/GenBank/DDBJ databases">
        <title>Complete genome sequence of Vibrio vulnificus CMCP6.</title>
        <authorList>
            <person name="Rhee J.H."/>
            <person name="Kim S.Y."/>
            <person name="Chung S.S."/>
            <person name="Kim J.J."/>
            <person name="Moon Y.H."/>
            <person name="Jeong H."/>
            <person name="Choy H.E."/>
        </authorList>
    </citation>
    <scope>NUCLEOTIDE SEQUENCE [LARGE SCALE GENOMIC DNA]</scope>
    <source>
        <strain>CMCP6</strain>
    </source>
</reference>
<comment type="function">
    <text evidence="1">Anchors the catalytic components of the fumarate reductase complex to the cell membrane, binds quinones.</text>
</comment>
<comment type="subunit">
    <text evidence="1">Part of an enzyme complex containing four subunits: a flavoprotein (FrdA), an iron-sulfur protein (FrdB), and two hydrophobic anchor proteins (FrdC and FrdD).</text>
</comment>
<comment type="subcellular location">
    <subcellularLocation>
        <location evidence="1">Cell inner membrane</location>
        <topology evidence="1">Multi-pass membrane protein</topology>
    </subcellularLocation>
</comment>
<comment type="similarity">
    <text evidence="1">Belongs to the FrdC family.</text>
</comment>
<proteinExistence type="inferred from homology"/>
<name>FRDC_VIBVU</name>
<dbReference type="EMBL" id="AE016795">
    <property type="protein sequence ID" value="AAO09723.1"/>
    <property type="molecule type" value="Genomic_DNA"/>
</dbReference>
<dbReference type="RefSeq" id="WP_011079252.1">
    <property type="nucleotide sequence ID" value="NC_004459.3"/>
</dbReference>
<dbReference type="SMR" id="Q8DCX3"/>
<dbReference type="GeneID" id="93895534"/>
<dbReference type="KEGG" id="vvu:VV1_1267"/>
<dbReference type="HOGENOM" id="CLU_156492_0_0_6"/>
<dbReference type="Proteomes" id="UP000002275">
    <property type="component" value="Chromosome 1"/>
</dbReference>
<dbReference type="GO" id="GO:0045283">
    <property type="term" value="C:fumarate reductase complex"/>
    <property type="evidence" value="ECO:0007669"/>
    <property type="project" value="UniProtKB-UniRule"/>
</dbReference>
<dbReference type="GO" id="GO:0005886">
    <property type="term" value="C:plasma membrane"/>
    <property type="evidence" value="ECO:0007669"/>
    <property type="project" value="UniProtKB-SubCell"/>
</dbReference>
<dbReference type="GO" id="GO:0000104">
    <property type="term" value="F:succinate dehydrogenase activity"/>
    <property type="evidence" value="ECO:0007669"/>
    <property type="project" value="UniProtKB-UniRule"/>
</dbReference>
<dbReference type="CDD" id="cd00546">
    <property type="entry name" value="QFR_TypeD_subunitC"/>
    <property type="match status" value="1"/>
</dbReference>
<dbReference type="Gene3D" id="1.20.1300.10">
    <property type="entry name" value="Fumarate reductase/succinate dehydrogenase, transmembrane subunit"/>
    <property type="match status" value="1"/>
</dbReference>
<dbReference type="HAMAP" id="MF_00708">
    <property type="entry name" value="Fumarate_red_C"/>
    <property type="match status" value="1"/>
</dbReference>
<dbReference type="InterPro" id="IPR003510">
    <property type="entry name" value="Fumarate_red_C"/>
</dbReference>
<dbReference type="InterPro" id="IPR034804">
    <property type="entry name" value="SQR/QFR_C/D"/>
</dbReference>
<dbReference type="NCBIfam" id="NF003445">
    <property type="entry name" value="PRK04987.1"/>
    <property type="match status" value="1"/>
</dbReference>
<dbReference type="Pfam" id="PF02300">
    <property type="entry name" value="Fumarate_red_C"/>
    <property type="match status" value="1"/>
</dbReference>
<dbReference type="PIRSF" id="PIRSF000180">
    <property type="entry name" value="FrdC"/>
    <property type="match status" value="1"/>
</dbReference>
<dbReference type="SUPFAM" id="SSF81343">
    <property type="entry name" value="Fumarate reductase respiratory complex transmembrane subunits"/>
    <property type="match status" value="1"/>
</dbReference>
<feature type="chain" id="PRO_0000196539" description="Fumarate reductase subunit C">
    <location>
        <begin position="1"/>
        <end position="127"/>
    </location>
</feature>
<feature type="transmembrane region" description="Helical" evidence="1">
    <location>
        <begin position="30"/>
        <end position="50"/>
    </location>
</feature>
<feature type="transmembrane region" description="Helical" evidence="1">
    <location>
        <begin position="67"/>
        <end position="87"/>
    </location>
</feature>
<feature type="transmembrane region" description="Helical" evidence="1">
    <location>
        <begin position="107"/>
        <end position="127"/>
    </location>
</feature>
<keyword id="KW-0997">Cell inner membrane</keyword>
<keyword id="KW-1003">Cell membrane</keyword>
<keyword id="KW-0472">Membrane</keyword>
<keyword id="KW-0812">Transmembrane</keyword>
<keyword id="KW-1133">Transmembrane helix</keyword>
<accession>Q8DCX3</accession>
<organism>
    <name type="scientific">Vibrio vulnificus (strain CMCP6)</name>
    <dbReference type="NCBI Taxonomy" id="216895"/>
    <lineage>
        <taxon>Bacteria</taxon>
        <taxon>Pseudomonadati</taxon>
        <taxon>Pseudomonadota</taxon>
        <taxon>Gammaproteobacteria</taxon>
        <taxon>Vibrionales</taxon>
        <taxon>Vibrionaceae</taxon>
        <taxon>Vibrio</taxon>
    </lineage>
</organism>
<evidence type="ECO:0000255" key="1">
    <source>
        <dbReference type="HAMAP-Rule" id="MF_00708"/>
    </source>
</evidence>
<sequence>MSNRKPYVREVKRTWWKDHPFYRFYMLREATVLPLILFTLFLTVGLGSLVKGPEAWQTWLNFMANPVVIAINIVALLGSLLHAHTFFSMMPQVMPIRLKGKPVDKKIIVLAQWAAVAFISLIVLIVV</sequence>
<protein>
    <recommendedName>
        <fullName evidence="1">Fumarate reductase subunit C</fullName>
    </recommendedName>
    <alternativeName>
        <fullName evidence="1">Quinol-fumarate reductase subunit C</fullName>
        <shortName evidence="1">QFR subunit C</shortName>
    </alternativeName>
</protein>